<feature type="signal peptide" evidence="2">
    <location>
        <begin position="1"/>
        <end position="26"/>
    </location>
</feature>
<feature type="chain" id="PRO_0000006658" description="Cystatin-11">
    <location>
        <begin position="27"/>
        <end position="138"/>
    </location>
</feature>
<feature type="glycosylation site" description="N-linked (GlcNAc...) asparagine" evidence="2">
    <location>
        <position position="132"/>
    </location>
</feature>
<feature type="disulfide bond" evidence="1">
    <location>
        <begin position="94"/>
        <end position="102"/>
    </location>
</feature>
<feature type="disulfide bond" evidence="1">
    <location>
        <begin position="115"/>
        <end position="135"/>
    </location>
</feature>
<feature type="splice variant" id="VSP_001260" description="In isoform 2." evidence="4 5">
    <location>
        <begin position="77"/>
        <end position="111"/>
    </location>
</feature>
<keyword id="KW-0025">Alternative splicing</keyword>
<keyword id="KW-0044">Antibiotic</keyword>
<keyword id="KW-0929">Antimicrobial</keyword>
<keyword id="KW-1015">Disulfide bond</keyword>
<keyword id="KW-0325">Glycoprotein</keyword>
<keyword id="KW-0646">Protease inhibitor</keyword>
<keyword id="KW-1185">Reference proteome</keyword>
<keyword id="KW-0964">Secreted</keyword>
<keyword id="KW-0732">Signal</keyword>
<keyword id="KW-0789">Thiol protease inhibitor</keyword>
<comment type="function">
    <text evidence="3">Has antibacterial activity against the Gram-negative bacteria E.coli. May play a role in sperm maturation and fertilization.</text>
</comment>
<comment type="subcellular location">
    <subcellularLocation>
        <location evidence="7">Secreted</location>
    </subcellularLocation>
    <text evidence="3">Probably secreted into the epididymis lumen, where it localizes to the outer surface of sperm. Specifically localizes to the postacrosomal and tail regions of sperm.</text>
</comment>
<comment type="alternative products">
    <event type="alternative splicing"/>
    <isoform>
        <id>Q9H112-1</id>
        <name>1</name>
        <sequence type="displayed"/>
    </isoform>
    <isoform>
        <id>Q9H112-2</id>
        <name>2</name>
        <sequence type="described" ref="VSP_001260"/>
    </isoform>
</comment>
<comment type="tissue specificity">
    <text evidence="3">Detected in the epithelium and lumen of the epididymis, and in sperm (at protein level).</text>
</comment>
<comment type="similarity">
    <text evidence="6">Belongs to the cystatin family.</text>
</comment>
<protein>
    <recommendedName>
        <fullName>Cystatin-11</fullName>
    </recommendedName>
</protein>
<reference key="1">
    <citation type="journal article" date="2002" name="Endocrinology">
        <title>Cystatin 11: a new member of the cystatin type 2 family.</title>
        <authorList>
            <person name="Hamil K.G."/>
            <person name="Liu Q."/>
            <person name="Sivashanmugam P."/>
            <person name="Yenugu S."/>
            <person name="Soundararajan R."/>
            <person name="Grossman G."/>
            <person name="Richardson R.T."/>
            <person name="Zhang Y.-L."/>
            <person name="O'Rand M.G."/>
            <person name="Petrusz P."/>
            <person name="French F.S."/>
            <person name="Hall S.H."/>
        </authorList>
    </citation>
    <scope>NUCLEOTIDE SEQUENCE [MRNA] (ISOFORMS 1 AND 2)</scope>
    <scope>FUNCTION</scope>
    <scope>SUBCELLULAR LOCATION</scope>
    <scope>TISSUE SPECIFICITY</scope>
</reference>
<reference key="2">
    <citation type="journal article" date="2001" name="Nature">
        <title>The DNA sequence and comparative analysis of human chromosome 20.</title>
        <authorList>
            <person name="Deloukas P."/>
            <person name="Matthews L.H."/>
            <person name="Ashurst J.L."/>
            <person name="Burton J."/>
            <person name="Gilbert J.G.R."/>
            <person name="Jones M."/>
            <person name="Stavrides G."/>
            <person name="Almeida J.P."/>
            <person name="Babbage A.K."/>
            <person name="Bagguley C.L."/>
            <person name="Bailey J."/>
            <person name="Barlow K.F."/>
            <person name="Bates K.N."/>
            <person name="Beard L.M."/>
            <person name="Beare D.M."/>
            <person name="Beasley O.P."/>
            <person name="Bird C.P."/>
            <person name="Blakey S.E."/>
            <person name="Bridgeman A.M."/>
            <person name="Brown A.J."/>
            <person name="Buck D."/>
            <person name="Burrill W.D."/>
            <person name="Butler A.P."/>
            <person name="Carder C."/>
            <person name="Carter N.P."/>
            <person name="Chapman J.C."/>
            <person name="Clamp M."/>
            <person name="Clark G."/>
            <person name="Clark L.N."/>
            <person name="Clark S.Y."/>
            <person name="Clee C.M."/>
            <person name="Clegg S."/>
            <person name="Cobley V.E."/>
            <person name="Collier R.E."/>
            <person name="Connor R.E."/>
            <person name="Corby N.R."/>
            <person name="Coulson A."/>
            <person name="Coville G.J."/>
            <person name="Deadman R."/>
            <person name="Dhami P.D."/>
            <person name="Dunn M."/>
            <person name="Ellington A.G."/>
            <person name="Frankland J.A."/>
            <person name="Fraser A."/>
            <person name="French L."/>
            <person name="Garner P."/>
            <person name="Grafham D.V."/>
            <person name="Griffiths C."/>
            <person name="Griffiths M.N.D."/>
            <person name="Gwilliam R."/>
            <person name="Hall R.E."/>
            <person name="Hammond S."/>
            <person name="Harley J.L."/>
            <person name="Heath P.D."/>
            <person name="Ho S."/>
            <person name="Holden J.L."/>
            <person name="Howden P.J."/>
            <person name="Huckle E."/>
            <person name="Hunt A.R."/>
            <person name="Hunt S.E."/>
            <person name="Jekosch K."/>
            <person name="Johnson C.M."/>
            <person name="Johnson D."/>
            <person name="Kay M.P."/>
            <person name="Kimberley A.M."/>
            <person name="King A."/>
            <person name="Knights A."/>
            <person name="Laird G.K."/>
            <person name="Lawlor S."/>
            <person name="Lehvaeslaiho M.H."/>
            <person name="Leversha M.A."/>
            <person name="Lloyd C."/>
            <person name="Lloyd D.M."/>
            <person name="Lovell J.D."/>
            <person name="Marsh V.L."/>
            <person name="Martin S.L."/>
            <person name="McConnachie L.J."/>
            <person name="McLay K."/>
            <person name="McMurray A.A."/>
            <person name="Milne S.A."/>
            <person name="Mistry D."/>
            <person name="Moore M.J.F."/>
            <person name="Mullikin J.C."/>
            <person name="Nickerson T."/>
            <person name="Oliver K."/>
            <person name="Parker A."/>
            <person name="Patel R."/>
            <person name="Pearce T.A.V."/>
            <person name="Peck A.I."/>
            <person name="Phillimore B.J.C.T."/>
            <person name="Prathalingam S.R."/>
            <person name="Plumb R.W."/>
            <person name="Ramsay H."/>
            <person name="Rice C.M."/>
            <person name="Ross M.T."/>
            <person name="Scott C.E."/>
            <person name="Sehra H.K."/>
            <person name="Shownkeen R."/>
            <person name="Sims S."/>
            <person name="Skuce C.D."/>
            <person name="Smith M.L."/>
            <person name="Soderlund C."/>
            <person name="Steward C.A."/>
            <person name="Sulston J.E."/>
            <person name="Swann R.M."/>
            <person name="Sycamore N."/>
            <person name="Taylor R."/>
            <person name="Tee L."/>
            <person name="Thomas D.W."/>
            <person name="Thorpe A."/>
            <person name="Tracey A."/>
            <person name="Tromans A.C."/>
            <person name="Vaudin M."/>
            <person name="Wall M."/>
            <person name="Wallis J.M."/>
            <person name="Whitehead S.L."/>
            <person name="Whittaker P."/>
            <person name="Willey D.L."/>
            <person name="Williams L."/>
            <person name="Williams S.A."/>
            <person name="Wilming L."/>
            <person name="Wray P.W."/>
            <person name="Hubbard T."/>
            <person name="Durbin R.M."/>
            <person name="Bentley D.R."/>
            <person name="Beck S."/>
            <person name="Rogers J."/>
        </authorList>
    </citation>
    <scope>NUCLEOTIDE SEQUENCE [LARGE SCALE GENOMIC DNA]</scope>
</reference>
<reference key="3">
    <citation type="submission" date="2005-09" db="EMBL/GenBank/DDBJ databases">
        <authorList>
            <person name="Mural R.J."/>
            <person name="Istrail S."/>
            <person name="Sutton G.G."/>
            <person name="Florea L."/>
            <person name="Halpern A.L."/>
            <person name="Mobarry C.M."/>
            <person name="Lippert R."/>
            <person name="Walenz B."/>
            <person name="Shatkay H."/>
            <person name="Dew I."/>
            <person name="Miller J.R."/>
            <person name="Flanigan M.J."/>
            <person name="Edwards N.J."/>
            <person name="Bolanos R."/>
            <person name="Fasulo D."/>
            <person name="Halldorsson B.V."/>
            <person name="Hannenhalli S."/>
            <person name="Turner R."/>
            <person name="Yooseph S."/>
            <person name="Lu F."/>
            <person name="Nusskern D.R."/>
            <person name="Shue B.C."/>
            <person name="Zheng X.H."/>
            <person name="Zhong F."/>
            <person name="Delcher A.L."/>
            <person name="Huson D.H."/>
            <person name="Kravitz S.A."/>
            <person name="Mouchard L."/>
            <person name="Reinert K."/>
            <person name="Remington K.A."/>
            <person name="Clark A.G."/>
            <person name="Waterman M.S."/>
            <person name="Eichler E.E."/>
            <person name="Adams M.D."/>
            <person name="Hunkapiller M.W."/>
            <person name="Myers E.W."/>
            <person name="Venter J.C."/>
        </authorList>
    </citation>
    <scope>NUCLEOTIDE SEQUENCE [LARGE SCALE GENOMIC DNA]</scope>
</reference>
<reference key="4">
    <citation type="journal article" date="2004" name="Genome Res.">
        <title>The status, quality, and expansion of the NIH full-length cDNA project: the Mammalian Gene Collection (MGC).</title>
        <authorList>
            <consortium name="The MGC Project Team"/>
        </authorList>
    </citation>
    <scope>NUCLEOTIDE SEQUENCE [LARGE SCALE MRNA] (ISOFORMS 1 AND 2)</scope>
</reference>
<sequence>MMAEPWQALQLLLAILLTLMALPYQARKKTFLSVHEVMAVENYAKDSLQWITDQYNKESDDKYHFRIFRVLKVQRQVTDHLEYHLNVEMQWTTCQKPETTNCVPQERELHKQVNCFFSVFAVPWFEQYKILNKSCSSD</sequence>
<gene>
    <name type="primary">CST11</name>
    <name type="synonym">CST8L</name>
</gene>
<name>CST11_HUMAN</name>
<organism>
    <name type="scientific">Homo sapiens</name>
    <name type="common">Human</name>
    <dbReference type="NCBI Taxonomy" id="9606"/>
    <lineage>
        <taxon>Eukaryota</taxon>
        <taxon>Metazoa</taxon>
        <taxon>Chordata</taxon>
        <taxon>Craniata</taxon>
        <taxon>Vertebrata</taxon>
        <taxon>Euteleostomi</taxon>
        <taxon>Mammalia</taxon>
        <taxon>Eutheria</taxon>
        <taxon>Euarchontoglires</taxon>
        <taxon>Primates</taxon>
        <taxon>Haplorrhini</taxon>
        <taxon>Catarrhini</taxon>
        <taxon>Hominidae</taxon>
        <taxon>Homo</taxon>
    </lineage>
</organism>
<proteinExistence type="evidence at protein level"/>
<evidence type="ECO:0000250" key="1">
    <source>
        <dbReference type="UniProtKB" id="O76096"/>
    </source>
</evidence>
<evidence type="ECO:0000255" key="2"/>
<evidence type="ECO:0000269" key="3">
    <source>
    </source>
</evidence>
<evidence type="ECO:0000303" key="4">
    <source>
    </source>
</evidence>
<evidence type="ECO:0000303" key="5">
    <source>
    </source>
</evidence>
<evidence type="ECO:0000305" key="6"/>
<evidence type="ECO:0000305" key="7">
    <source>
    </source>
</evidence>
<accession>Q9H112</accession>
<accession>Q0VAF2</accession>
<accession>Q0VAF3</accession>
<accession>Q8WXU5</accession>
<accession>Q8WXU6</accession>
<accession>Q9H113</accession>
<dbReference type="EMBL" id="AF335480">
    <property type="protein sequence ID" value="AAL71991.1"/>
    <property type="molecule type" value="mRNA"/>
</dbReference>
<dbReference type="EMBL" id="AF335481">
    <property type="protein sequence ID" value="AAL71992.1"/>
    <property type="molecule type" value="mRNA"/>
</dbReference>
<dbReference type="EMBL" id="AL096677">
    <property type="status" value="NOT_ANNOTATED_CDS"/>
    <property type="molecule type" value="Genomic_DNA"/>
</dbReference>
<dbReference type="EMBL" id="CH471133">
    <property type="protein sequence ID" value="EAX10146.1"/>
    <property type="molecule type" value="Genomic_DNA"/>
</dbReference>
<dbReference type="EMBL" id="BC121079">
    <property type="protein sequence ID" value="AAI21080.1"/>
    <property type="molecule type" value="mRNA"/>
</dbReference>
<dbReference type="EMBL" id="BC121080">
    <property type="protein sequence ID" value="AAI21081.1"/>
    <property type="molecule type" value="mRNA"/>
</dbReference>
<dbReference type="CCDS" id="CCDS13154.1">
    <molecule id="Q9H112-2"/>
</dbReference>
<dbReference type="CCDS" id="CCDS13155.1">
    <molecule id="Q9H112-1"/>
</dbReference>
<dbReference type="RefSeq" id="NP_543020.2">
    <molecule id="Q9H112-2"/>
    <property type="nucleotide sequence ID" value="NM_080830.2"/>
</dbReference>
<dbReference type="RefSeq" id="NP_570612.1">
    <molecule id="Q9H112-1"/>
    <property type="nucleotide sequence ID" value="NM_130794.2"/>
</dbReference>
<dbReference type="SMR" id="Q9H112"/>
<dbReference type="BioGRID" id="126748">
    <property type="interactions" value="97"/>
</dbReference>
<dbReference type="FunCoup" id="Q9H112">
    <property type="interactions" value="24"/>
</dbReference>
<dbReference type="IntAct" id="Q9H112">
    <property type="interactions" value="71"/>
</dbReference>
<dbReference type="STRING" id="9606.ENSP00000366208"/>
<dbReference type="MEROPS" id="I25.027"/>
<dbReference type="GlyCosmos" id="Q9H112">
    <property type="glycosylation" value="1 site, No reported glycans"/>
</dbReference>
<dbReference type="GlyGen" id="Q9H112">
    <property type="glycosylation" value="1 site"/>
</dbReference>
<dbReference type="iPTMnet" id="Q9H112"/>
<dbReference type="PhosphoSitePlus" id="Q9H112"/>
<dbReference type="BioMuta" id="CST11"/>
<dbReference type="DMDM" id="76803548"/>
<dbReference type="MassIVE" id="Q9H112"/>
<dbReference type="PaxDb" id="9606-ENSP00000366208"/>
<dbReference type="Antibodypedia" id="54198">
    <property type="antibodies" value="82 antibodies from 17 providers"/>
</dbReference>
<dbReference type="DNASU" id="140880"/>
<dbReference type="Ensembl" id="ENST00000377007.3">
    <molecule id="Q9H112-2"/>
    <property type="protein sequence ID" value="ENSP00000366206.3"/>
    <property type="gene ID" value="ENSG00000125831.10"/>
</dbReference>
<dbReference type="Ensembl" id="ENST00000377009.8">
    <molecule id="Q9H112-1"/>
    <property type="protein sequence ID" value="ENSP00000366208.3"/>
    <property type="gene ID" value="ENSG00000125831.10"/>
</dbReference>
<dbReference type="GeneID" id="140880"/>
<dbReference type="KEGG" id="hsa:140880"/>
<dbReference type="MANE-Select" id="ENST00000377009.8">
    <property type="protein sequence ID" value="ENSP00000366208.3"/>
    <property type="RefSeq nucleotide sequence ID" value="NM_130794.2"/>
    <property type="RefSeq protein sequence ID" value="NP_570612.1"/>
</dbReference>
<dbReference type="UCSC" id="uc002wtf.2">
    <molecule id="Q9H112-1"/>
    <property type="organism name" value="human"/>
</dbReference>
<dbReference type="AGR" id="HGNC:15959"/>
<dbReference type="CTD" id="140880"/>
<dbReference type="DisGeNET" id="140880"/>
<dbReference type="GeneCards" id="CST11"/>
<dbReference type="HGNC" id="HGNC:15959">
    <property type="gene designation" value="CST11"/>
</dbReference>
<dbReference type="HPA" id="ENSG00000125831">
    <property type="expression patterns" value="Tissue enriched (epididymis)"/>
</dbReference>
<dbReference type="MIM" id="609731">
    <property type="type" value="gene"/>
</dbReference>
<dbReference type="neXtProt" id="NX_Q9H112"/>
<dbReference type="OpenTargets" id="ENSG00000125831"/>
<dbReference type="PharmGKB" id="PA26974"/>
<dbReference type="VEuPathDB" id="HostDB:ENSG00000125831"/>
<dbReference type="eggNOG" id="ENOG502RWFM">
    <property type="taxonomic scope" value="Eukaryota"/>
</dbReference>
<dbReference type="GeneTree" id="ENSGT00910000144356"/>
<dbReference type="HOGENOM" id="CLU_118168_2_1_1"/>
<dbReference type="InParanoid" id="Q9H112"/>
<dbReference type="OMA" id="NCVPQEG"/>
<dbReference type="OrthoDB" id="1908104at2759"/>
<dbReference type="PAN-GO" id="Q9H112">
    <property type="GO annotations" value="5 GO annotations based on evolutionary models"/>
</dbReference>
<dbReference type="PhylomeDB" id="Q9H112"/>
<dbReference type="PathwayCommons" id="Q9H112"/>
<dbReference type="BioGRID-ORCS" id="140880">
    <property type="hits" value="13 hits in 1144 CRISPR screens"/>
</dbReference>
<dbReference type="GeneWiki" id="CST11"/>
<dbReference type="GenomeRNAi" id="140880"/>
<dbReference type="Pharos" id="Q9H112">
    <property type="development level" value="Tbio"/>
</dbReference>
<dbReference type="PRO" id="PR:Q9H112"/>
<dbReference type="Proteomes" id="UP000005640">
    <property type="component" value="Chromosome 20"/>
</dbReference>
<dbReference type="RNAct" id="Q9H112">
    <property type="molecule type" value="protein"/>
</dbReference>
<dbReference type="Bgee" id="ENSG00000125831">
    <property type="expression patterns" value="Expressed in corpus epididymis and 55 other cell types or tissues"/>
</dbReference>
<dbReference type="ExpressionAtlas" id="Q9H112">
    <property type="expression patterns" value="baseline and differential"/>
</dbReference>
<dbReference type="GO" id="GO:0005737">
    <property type="term" value="C:cytoplasm"/>
    <property type="evidence" value="ECO:0000315"/>
    <property type="project" value="UniProtKB"/>
</dbReference>
<dbReference type="GO" id="GO:0005576">
    <property type="term" value="C:extracellular region"/>
    <property type="evidence" value="ECO:0007669"/>
    <property type="project" value="UniProtKB-SubCell"/>
</dbReference>
<dbReference type="GO" id="GO:0005634">
    <property type="term" value="C:nucleus"/>
    <property type="evidence" value="ECO:0000315"/>
    <property type="project" value="UniProtKB"/>
</dbReference>
<dbReference type="GO" id="GO:0036126">
    <property type="term" value="C:sperm flagellum"/>
    <property type="evidence" value="ECO:0000314"/>
    <property type="project" value="UniProtKB"/>
</dbReference>
<dbReference type="GO" id="GO:0061827">
    <property type="term" value="C:sperm head"/>
    <property type="evidence" value="ECO:0000314"/>
    <property type="project" value="UniProtKB"/>
</dbReference>
<dbReference type="GO" id="GO:0004869">
    <property type="term" value="F:cysteine-type endopeptidase inhibitor activity"/>
    <property type="evidence" value="ECO:0007669"/>
    <property type="project" value="UniProtKB-KW"/>
</dbReference>
<dbReference type="GO" id="GO:0030521">
    <property type="term" value="P:androgen receptor signaling pathway"/>
    <property type="evidence" value="ECO:0000250"/>
    <property type="project" value="UniProtKB"/>
</dbReference>
<dbReference type="GO" id="GO:0050829">
    <property type="term" value="P:defense response to Gram-negative bacterium"/>
    <property type="evidence" value="ECO:0000314"/>
    <property type="project" value="UniProtKB"/>
</dbReference>
<dbReference type="GO" id="GO:0031640">
    <property type="term" value="P:killing of cells of another organism"/>
    <property type="evidence" value="ECO:0000314"/>
    <property type="project" value="UniProtKB"/>
</dbReference>
<dbReference type="CDD" id="cd00042">
    <property type="entry name" value="CY"/>
    <property type="match status" value="1"/>
</dbReference>
<dbReference type="FunFam" id="3.10.450.10:FF:000019">
    <property type="entry name" value="Cystatin 11"/>
    <property type="match status" value="1"/>
</dbReference>
<dbReference type="Gene3D" id="3.10.450.10">
    <property type="match status" value="1"/>
</dbReference>
<dbReference type="InterPro" id="IPR042930">
    <property type="entry name" value="CST11"/>
</dbReference>
<dbReference type="InterPro" id="IPR000010">
    <property type="entry name" value="Cystatin_dom"/>
</dbReference>
<dbReference type="InterPro" id="IPR046350">
    <property type="entry name" value="Cystatin_sf"/>
</dbReference>
<dbReference type="PANTHER" id="PTHR47886">
    <property type="entry name" value="CYSTATIN-11"/>
    <property type="match status" value="1"/>
</dbReference>
<dbReference type="PANTHER" id="PTHR47886:SF1">
    <property type="entry name" value="CYSTATIN-11"/>
    <property type="match status" value="1"/>
</dbReference>
<dbReference type="Pfam" id="PF00031">
    <property type="entry name" value="Cystatin"/>
    <property type="match status" value="1"/>
</dbReference>
<dbReference type="SMART" id="SM00043">
    <property type="entry name" value="CY"/>
    <property type="match status" value="1"/>
</dbReference>
<dbReference type="SUPFAM" id="SSF54403">
    <property type="entry name" value="Cystatin/monellin"/>
    <property type="match status" value="1"/>
</dbReference>